<name>TM108_YEAST</name>
<sequence length="946" mass="107723">MSDNLLSLENPVVPSHYELRLEIDPKQSSPNFKGSAIIHLKFNPNSTTLASIEDSFTQFKLHSKDLIVLSAHATIGSTKFDLKISQDTGKHLSIFNSESPIQLSNDCPLILSVQYVGKIRDIKTHHDKTFGIFKTNFMDRKTGTANNHVVATHCQPFSASNIFPCIDEPSNKSTFQLNIATDAQYKAVSNTPVEMVEALDSSQKHLVKFAKTPLMTTSVFGFSIGDLEFLKTEIKLEGDRTIPVSIYAPWDIANAAFTLDTVQKYLPLLESYFKCPYPLPKLDFVLLPYLSDMAMENFGMITIQLNHLLIPPNALANETVREQAQQLIVHELVHQWMGNYISFDSWESLWFNESFATWLACHILEQNGDLSHYWTSEPYLLQQVEPTMCRDAADVNGRSIFQIAQRNTGIDSQTSDIFDPEAYTKGIIMLRSLQLATGESHLQKGLESVFEDTKTFHARSVKPMDIWNHIGKFLKSQNITNFVSSWTRTPGLPVVKVEVEEKDGKTQTKLTQHRFINQLSTEEKDQLEDVPYQVPLFGVLPDGKMDTKNVLLTDRTLKFDYPILVINHLAQGYYRVSYESEECYALINDKITEETLSEIDLRKIFLDLSQFIGDEGFQNSIHLHGLFKILNHIASPSTKIASKYWDPLSKGLEVLQTIDRASLTSSKLQSFLKKKIVIPLFNKIDWPHGEFDKSTNPHELKVMSQVLFLNKNSAKCAELCQIYFKHLLQGPRSSVPLELVNSILVVVSQHCANIKQWKKIFDLVKRSSCTGITNHVINMYDQNSSETAMLIQNGAIESLGFCLDSDIVKKTLNFITSNIESEGMELALFGFNYNFKKRLNKNEKPQDQVVRETIWEWYMGNFDQWARKATRKGTTTGDHLHKALRSISLIIFQMFVADEPQKIEKFINLEKEKLGQSLLSLDDIWASVQQDEESRKTIRRDLASLV</sequence>
<proteinExistence type="evidence at protein level"/>
<dbReference type="EC" id="3.4.11.-"/>
<dbReference type="EMBL" id="Z38059">
    <property type="protein sequence ID" value="CAA86141.1"/>
    <property type="molecule type" value="Genomic_DNA"/>
</dbReference>
<dbReference type="EMBL" id="BK006942">
    <property type="protein sequence ID" value="DAA08415.1"/>
    <property type="molecule type" value="Genomic_DNA"/>
</dbReference>
<dbReference type="PIR" id="S48397">
    <property type="entry name" value="S48397"/>
</dbReference>
<dbReference type="RefSeq" id="NP_012129.1">
    <property type="nucleotide sequence ID" value="NM_001179485.1"/>
</dbReference>
<dbReference type="SMR" id="P40462"/>
<dbReference type="BioGRID" id="34854">
    <property type="interactions" value="262"/>
</dbReference>
<dbReference type="DIP" id="DIP-5097N"/>
<dbReference type="FunCoup" id="P40462">
    <property type="interactions" value="137"/>
</dbReference>
<dbReference type="IntAct" id="P40462">
    <property type="interactions" value="3"/>
</dbReference>
<dbReference type="MINT" id="P40462"/>
<dbReference type="STRING" id="4932.YIL137C"/>
<dbReference type="MEROPS" id="M01.017"/>
<dbReference type="iPTMnet" id="P40462"/>
<dbReference type="PaxDb" id="4932-YIL137C"/>
<dbReference type="PeptideAtlas" id="P40462"/>
<dbReference type="TopDownProteomics" id="P40462"/>
<dbReference type="EnsemblFungi" id="YIL137C_mRNA">
    <property type="protein sequence ID" value="YIL137C"/>
    <property type="gene ID" value="YIL137C"/>
</dbReference>
<dbReference type="GeneID" id="854669"/>
<dbReference type="KEGG" id="sce:YIL137C"/>
<dbReference type="AGR" id="SGD:S000001399"/>
<dbReference type="SGD" id="S000001399">
    <property type="gene designation" value="TMA108"/>
</dbReference>
<dbReference type="VEuPathDB" id="FungiDB:YIL137C"/>
<dbReference type="eggNOG" id="KOG1046">
    <property type="taxonomic scope" value="Eukaryota"/>
</dbReference>
<dbReference type="HOGENOM" id="CLU_003705_3_0_1"/>
<dbReference type="InParanoid" id="P40462"/>
<dbReference type="OMA" id="DMAMENF"/>
<dbReference type="OrthoDB" id="10031169at2759"/>
<dbReference type="BioCyc" id="YEAST:G3O-31388-MONOMER"/>
<dbReference type="BioGRID-ORCS" id="854669">
    <property type="hits" value="3 hits in 10 CRISPR screens"/>
</dbReference>
<dbReference type="PRO" id="PR:P40462"/>
<dbReference type="Proteomes" id="UP000002311">
    <property type="component" value="Chromosome IX"/>
</dbReference>
<dbReference type="RNAct" id="P40462">
    <property type="molecule type" value="protein"/>
</dbReference>
<dbReference type="GO" id="GO:0005737">
    <property type="term" value="C:cytoplasm"/>
    <property type="evidence" value="ECO:0007005"/>
    <property type="project" value="SGD"/>
</dbReference>
<dbReference type="GO" id="GO:0005615">
    <property type="term" value="C:extracellular space"/>
    <property type="evidence" value="ECO:0000318"/>
    <property type="project" value="GO_Central"/>
</dbReference>
<dbReference type="GO" id="GO:0016020">
    <property type="term" value="C:membrane"/>
    <property type="evidence" value="ECO:0000318"/>
    <property type="project" value="GO_Central"/>
</dbReference>
<dbReference type="GO" id="GO:0005854">
    <property type="term" value="C:nascent polypeptide-associated complex"/>
    <property type="evidence" value="ECO:0000314"/>
    <property type="project" value="SGD"/>
</dbReference>
<dbReference type="GO" id="GO:0070006">
    <property type="term" value="F:metalloaminopeptidase activity"/>
    <property type="evidence" value="ECO:0000318"/>
    <property type="project" value="GO_Central"/>
</dbReference>
<dbReference type="GO" id="GO:1990593">
    <property type="term" value="F:nascent polypeptide-associated complex binding"/>
    <property type="evidence" value="ECO:0000314"/>
    <property type="project" value="SGD"/>
</dbReference>
<dbReference type="GO" id="GO:0042277">
    <property type="term" value="F:peptide binding"/>
    <property type="evidence" value="ECO:0000318"/>
    <property type="project" value="GO_Central"/>
</dbReference>
<dbReference type="GO" id="GO:0008270">
    <property type="term" value="F:zinc ion binding"/>
    <property type="evidence" value="ECO:0000318"/>
    <property type="project" value="GO_Central"/>
</dbReference>
<dbReference type="GO" id="GO:0043171">
    <property type="term" value="P:peptide catabolic process"/>
    <property type="evidence" value="ECO:0000318"/>
    <property type="project" value="GO_Central"/>
</dbReference>
<dbReference type="GO" id="GO:0006508">
    <property type="term" value="P:proteolysis"/>
    <property type="evidence" value="ECO:0000318"/>
    <property type="project" value="GO_Central"/>
</dbReference>
<dbReference type="GO" id="GO:2000765">
    <property type="term" value="P:regulation of cytoplasmic translation"/>
    <property type="evidence" value="ECO:0000315"/>
    <property type="project" value="SGD"/>
</dbReference>
<dbReference type="GO" id="GO:0042254">
    <property type="term" value="P:ribosome biogenesis"/>
    <property type="evidence" value="ECO:0000315"/>
    <property type="project" value="SGD"/>
</dbReference>
<dbReference type="CDD" id="cd09601">
    <property type="entry name" value="M1_APN-Q_like"/>
    <property type="match status" value="1"/>
</dbReference>
<dbReference type="FunFam" id="1.10.390.10:FF:000028">
    <property type="entry name" value="Aminopeptidase"/>
    <property type="match status" value="1"/>
</dbReference>
<dbReference type="Gene3D" id="1.25.50.20">
    <property type="match status" value="1"/>
</dbReference>
<dbReference type="Gene3D" id="2.60.40.1910">
    <property type="match status" value="1"/>
</dbReference>
<dbReference type="Gene3D" id="1.10.390.10">
    <property type="entry name" value="Neutral Protease Domain 2"/>
    <property type="match status" value="1"/>
</dbReference>
<dbReference type="Gene3D" id="2.60.40.1730">
    <property type="entry name" value="tricorn interacting facor f3 domain"/>
    <property type="match status" value="1"/>
</dbReference>
<dbReference type="InterPro" id="IPR045357">
    <property type="entry name" value="Aminopeptidase_N-like_N"/>
</dbReference>
<dbReference type="InterPro" id="IPR042097">
    <property type="entry name" value="Aminopeptidase_N-like_N_sf"/>
</dbReference>
<dbReference type="InterPro" id="IPR024571">
    <property type="entry name" value="ERAP1-like_C_dom"/>
</dbReference>
<dbReference type="InterPro" id="IPR034016">
    <property type="entry name" value="M1_APN-typ"/>
</dbReference>
<dbReference type="InterPro" id="IPR001930">
    <property type="entry name" value="Peptidase_M1"/>
</dbReference>
<dbReference type="InterPro" id="IPR050344">
    <property type="entry name" value="Peptidase_M1_aminopeptidases"/>
</dbReference>
<dbReference type="InterPro" id="IPR014782">
    <property type="entry name" value="Peptidase_M1_dom"/>
</dbReference>
<dbReference type="InterPro" id="IPR027268">
    <property type="entry name" value="Peptidase_M4/M1_CTD_sf"/>
</dbReference>
<dbReference type="PANTHER" id="PTHR11533:SF299">
    <property type="entry name" value="AMINOPEPTIDASE"/>
    <property type="match status" value="1"/>
</dbReference>
<dbReference type="PANTHER" id="PTHR11533">
    <property type="entry name" value="PROTEASE M1 ZINC METALLOPROTEASE"/>
    <property type="match status" value="1"/>
</dbReference>
<dbReference type="Pfam" id="PF11838">
    <property type="entry name" value="ERAP1_C"/>
    <property type="match status" value="1"/>
</dbReference>
<dbReference type="Pfam" id="PF01433">
    <property type="entry name" value="Peptidase_M1"/>
    <property type="match status" value="1"/>
</dbReference>
<dbReference type="Pfam" id="PF17900">
    <property type="entry name" value="Peptidase_M1_N"/>
    <property type="match status" value="1"/>
</dbReference>
<dbReference type="PRINTS" id="PR00756">
    <property type="entry name" value="ALADIPTASE"/>
</dbReference>
<dbReference type="SUPFAM" id="SSF63737">
    <property type="entry name" value="Leukotriene A4 hydrolase N-terminal domain"/>
    <property type="match status" value="1"/>
</dbReference>
<dbReference type="SUPFAM" id="SSF55486">
    <property type="entry name" value="Metalloproteases ('zincins'), catalytic domain"/>
    <property type="match status" value="1"/>
</dbReference>
<dbReference type="PROSITE" id="PS00142">
    <property type="entry name" value="ZINC_PROTEASE"/>
    <property type="match status" value="1"/>
</dbReference>
<protein>
    <recommendedName>
        <fullName>Protein TMA108</fullName>
        <ecNumber>3.4.11.-</ecNumber>
    </recommendedName>
    <alternativeName>
        <fullName>108 kDa translation machinery-associated protein</fullName>
    </alternativeName>
</protein>
<gene>
    <name type="primary">TMA108</name>
    <name type="ordered locus">YIL137C</name>
</gene>
<organism>
    <name type="scientific">Saccharomyces cerevisiae (strain ATCC 204508 / S288c)</name>
    <name type="common">Baker's yeast</name>
    <dbReference type="NCBI Taxonomy" id="559292"/>
    <lineage>
        <taxon>Eukaryota</taxon>
        <taxon>Fungi</taxon>
        <taxon>Dikarya</taxon>
        <taxon>Ascomycota</taxon>
        <taxon>Saccharomycotina</taxon>
        <taxon>Saccharomycetes</taxon>
        <taxon>Saccharomycetales</taxon>
        <taxon>Saccharomycetaceae</taxon>
        <taxon>Saccharomyces</taxon>
    </lineage>
</organism>
<reference key="1">
    <citation type="journal article" date="1997" name="Nature">
        <title>The nucleotide sequence of Saccharomyces cerevisiae chromosome IX.</title>
        <authorList>
            <person name="Churcher C.M."/>
            <person name="Bowman S."/>
            <person name="Badcock K."/>
            <person name="Bankier A.T."/>
            <person name="Brown D."/>
            <person name="Chillingworth T."/>
            <person name="Connor R."/>
            <person name="Devlin K."/>
            <person name="Gentles S."/>
            <person name="Hamlin N."/>
            <person name="Harris D.E."/>
            <person name="Horsnell T."/>
            <person name="Hunt S."/>
            <person name="Jagels K."/>
            <person name="Jones M."/>
            <person name="Lye G."/>
            <person name="Moule S."/>
            <person name="Odell C."/>
            <person name="Pearson D."/>
            <person name="Rajandream M.A."/>
            <person name="Rice P."/>
            <person name="Rowley N."/>
            <person name="Skelton J."/>
            <person name="Smith V."/>
            <person name="Walsh S.V."/>
            <person name="Whitehead S."/>
            <person name="Barrell B.G."/>
        </authorList>
    </citation>
    <scope>NUCLEOTIDE SEQUENCE [LARGE SCALE GENOMIC DNA]</scope>
    <source>
        <strain>ATCC 204508 / S288c</strain>
    </source>
</reference>
<reference key="2">
    <citation type="journal article" date="2014" name="G3 (Bethesda)">
        <title>The reference genome sequence of Saccharomyces cerevisiae: Then and now.</title>
        <authorList>
            <person name="Engel S.R."/>
            <person name="Dietrich F.S."/>
            <person name="Fisk D.G."/>
            <person name="Binkley G."/>
            <person name="Balakrishnan R."/>
            <person name="Costanzo M.C."/>
            <person name="Dwight S.S."/>
            <person name="Hitz B.C."/>
            <person name="Karra K."/>
            <person name="Nash R.S."/>
            <person name="Weng S."/>
            <person name="Wong E.D."/>
            <person name="Lloyd P."/>
            <person name="Skrzypek M.S."/>
            <person name="Miyasato S.R."/>
            <person name="Simison M."/>
            <person name="Cherry J.M."/>
        </authorList>
    </citation>
    <scope>GENOME REANNOTATION</scope>
    <source>
        <strain>ATCC 204508 / S288c</strain>
    </source>
</reference>
<reference key="3">
    <citation type="journal article" date="2003" name="Nature">
        <title>Global analysis of protein localization in budding yeast.</title>
        <authorList>
            <person name="Huh W.-K."/>
            <person name="Falvo J.V."/>
            <person name="Gerke L.C."/>
            <person name="Carroll A.S."/>
            <person name="Howson R.W."/>
            <person name="Weissman J.S."/>
            <person name="O'Shea E.K."/>
        </authorList>
    </citation>
    <scope>SUBCELLULAR LOCATION [LARGE SCALE ANALYSIS]</scope>
</reference>
<reference key="4">
    <citation type="journal article" date="2003" name="Nature">
        <title>Global analysis of protein expression in yeast.</title>
        <authorList>
            <person name="Ghaemmaghami S."/>
            <person name="Huh W.-K."/>
            <person name="Bower K."/>
            <person name="Howson R.W."/>
            <person name="Belle A."/>
            <person name="Dephoure N."/>
            <person name="O'Shea E.K."/>
            <person name="Weissman J.S."/>
        </authorList>
    </citation>
    <scope>LEVEL OF PROTEIN EXPRESSION [LARGE SCALE ANALYSIS]</scope>
</reference>
<reference key="5">
    <citation type="journal article" date="2006" name="Genes Dev.">
        <title>Systematic identification and functional screens of uncharacterized proteins associated with eukaryotic ribosomal complexes.</title>
        <authorList>
            <person name="Fleischer T.C."/>
            <person name="Weaver C.M."/>
            <person name="McAfee K.J."/>
            <person name="Jennings J.L."/>
            <person name="Link A.J."/>
        </authorList>
    </citation>
    <scope>ASSOCIATION WITH RIBOSOMAL COMPLEXES</scope>
    <scope>IDENTIFICATION BY MASS SPECTROMETRY</scope>
</reference>
<reference key="6">
    <citation type="journal article" date="2012" name="Proc. Natl. Acad. Sci. U.S.A.">
        <title>N-terminal acetylome analyses and functional insights of the N-terminal acetyltransferase NatB.</title>
        <authorList>
            <person name="Van Damme P."/>
            <person name="Lasa M."/>
            <person name="Polevoda B."/>
            <person name="Gazquez C."/>
            <person name="Elosegui-Artola A."/>
            <person name="Kim D.S."/>
            <person name="De Juan-Pardo E."/>
            <person name="Demeyer K."/>
            <person name="Hole K."/>
            <person name="Larrea E."/>
            <person name="Timmerman E."/>
            <person name="Prieto J."/>
            <person name="Arnesen T."/>
            <person name="Sherman F."/>
            <person name="Gevaert K."/>
            <person name="Aldabe R."/>
        </authorList>
    </citation>
    <scope>ACETYLATION [LARGE SCALE ANALYSIS] AT SER-2</scope>
    <scope>CLEAVAGE OF INITIATOR METHIONINE [LARGE SCALE ANALYSIS]</scope>
    <scope>IDENTIFICATION BY MASS SPECTROMETRY [LARGE SCALE ANALYSIS]</scope>
</reference>
<keyword id="KW-0007">Acetylation</keyword>
<keyword id="KW-0031">Aminopeptidase</keyword>
<keyword id="KW-0963">Cytoplasm</keyword>
<keyword id="KW-0378">Hydrolase</keyword>
<keyword id="KW-0479">Metal-binding</keyword>
<keyword id="KW-0482">Metalloprotease</keyword>
<keyword id="KW-0645">Protease</keyword>
<keyword id="KW-1185">Reference proteome</keyword>
<keyword id="KW-0690">Ribosome biogenesis</keyword>
<keyword id="KW-0862">Zinc</keyword>
<accession>P40462</accession>
<accession>D6VVE9</accession>
<comment type="function">
    <text>Putative zinc aminopeptidase which may be involved in ribosome biogenesis.</text>
</comment>
<comment type="cofactor">
    <cofactor evidence="1">
        <name>Zn(2+)</name>
        <dbReference type="ChEBI" id="CHEBI:29105"/>
    </cofactor>
    <text evidence="1">Binds 1 zinc ion per subunit.</text>
</comment>
<comment type="subunit">
    <text>Associates with ribosomal complexes.</text>
</comment>
<comment type="subcellular location">
    <subcellularLocation>
        <location evidence="3">Cytoplasm</location>
    </subcellularLocation>
</comment>
<comment type="miscellaneous">
    <text evidence="4">Present with 5110 molecules/cell in log phase SD medium.</text>
</comment>
<comment type="similarity">
    <text evidence="5">Belongs to the peptidase M1 family.</text>
</comment>
<feature type="initiator methionine" description="Removed" evidence="6">
    <location>
        <position position="1"/>
    </location>
</feature>
<feature type="chain" id="PRO_0000095121" description="Protein TMA108">
    <location>
        <begin position="2"/>
        <end position="946"/>
    </location>
</feature>
<feature type="active site" description="Proton acceptor" evidence="2">
    <location>
        <position position="331"/>
    </location>
</feature>
<feature type="binding site" evidence="1">
    <location>
        <begin position="293"/>
        <end position="297"/>
    </location>
    <ligand>
        <name>substrate</name>
    </ligand>
</feature>
<feature type="binding site" evidence="2">
    <location>
        <position position="330"/>
    </location>
    <ligand>
        <name>Zn(2+)</name>
        <dbReference type="ChEBI" id="CHEBI:29105"/>
        <note>catalytic</note>
    </ligand>
</feature>
<feature type="binding site" evidence="2">
    <location>
        <position position="334"/>
    </location>
    <ligand>
        <name>Zn(2+)</name>
        <dbReference type="ChEBI" id="CHEBI:29105"/>
        <note>catalytic</note>
    </ligand>
</feature>
<feature type="binding site" evidence="2">
    <location>
        <position position="353"/>
    </location>
    <ligand>
        <name>Zn(2+)</name>
        <dbReference type="ChEBI" id="CHEBI:29105"/>
        <note>catalytic</note>
    </ligand>
</feature>
<feature type="site" description="Transition state stabilizer" evidence="1">
    <location>
        <position position="423"/>
    </location>
</feature>
<feature type="modified residue" description="N-acetylserine" evidence="6">
    <location>
        <position position="2"/>
    </location>
</feature>
<evidence type="ECO:0000250" key="1"/>
<evidence type="ECO:0000255" key="2">
    <source>
        <dbReference type="PROSITE-ProRule" id="PRU10095"/>
    </source>
</evidence>
<evidence type="ECO:0000269" key="3">
    <source>
    </source>
</evidence>
<evidence type="ECO:0000269" key="4">
    <source>
    </source>
</evidence>
<evidence type="ECO:0000305" key="5"/>
<evidence type="ECO:0007744" key="6">
    <source>
    </source>
</evidence>